<name>PSA2_XENLA</name>
<feature type="initiator methionine" description="Removed" evidence="1">
    <location>
        <position position="1"/>
    </location>
</feature>
<feature type="chain" id="PRO_0000124080" description="Proteasome subunit alpha type-2">
    <location>
        <begin position="2"/>
        <end position="234"/>
    </location>
</feature>
<feature type="modified residue" description="N-acetylalanine" evidence="1">
    <location>
        <position position="2"/>
    </location>
</feature>
<feature type="modified residue" description="Phosphotyrosine" evidence="1">
    <location>
        <position position="121"/>
    </location>
</feature>
<sequence>MAERGYSFSLTTFSPSGKLVQIEYALAAVAAGAPSVGIKATNGVVLATEKKQKSILYDEQSAHKVEPITKHIGMVYSGMGPDYRVLVRRARKLAQQYYLVYQEPIPTAQLVQRVASVMQEYTQSGGVRPFGVSLLIAGWDEGRPYLFQSDPSGAYFAWKATAMGKNYVNGKTFLEKRYNEDLELEDAIHTAILTLKESFEGQMTEDNIEVGICNEAGFKRLTPAEVKDYLAAIA</sequence>
<accession>P24495</accession>
<accession>Q6INM4</accession>
<evidence type="ECO:0000250" key="1"/>
<evidence type="ECO:0000250" key="2">
    <source>
        <dbReference type="UniProtKB" id="P25787"/>
    </source>
</evidence>
<evidence type="ECO:0000255" key="3">
    <source>
        <dbReference type="PROSITE-ProRule" id="PRU00808"/>
    </source>
</evidence>
<dbReference type="EMBL" id="S51111">
    <property type="protein sequence ID" value="AAB19485.1"/>
    <property type="molecule type" value="mRNA"/>
</dbReference>
<dbReference type="EMBL" id="BC072254">
    <property type="protein sequence ID" value="AAH72254.1"/>
    <property type="molecule type" value="mRNA"/>
</dbReference>
<dbReference type="PIR" id="JH0421">
    <property type="entry name" value="JH0421"/>
</dbReference>
<dbReference type="RefSeq" id="NP_001084053.1">
    <property type="nucleotide sequence ID" value="NM_001090584.1"/>
</dbReference>
<dbReference type="SMR" id="P24495"/>
<dbReference type="BioGRID" id="100604">
    <property type="interactions" value="1"/>
</dbReference>
<dbReference type="MEROPS" id="T01.972"/>
<dbReference type="DNASU" id="399279"/>
<dbReference type="GeneID" id="399279"/>
<dbReference type="KEGG" id="xla:108720001"/>
<dbReference type="KEGG" id="xla:399279"/>
<dbReference type="AGR" id="Xenbase:XB-GENE-964716"/>
<dbReference type="CTD" id="108720001"/>
<dbReference type="CTD" id="399279"/>
<dbReference type="Xenbase" id="XB-GENE-964716">
    <property type="gene designation" value="psma2.L"/>
</dbReference>
<dbReference type="OMA" id="GHISTRN"/>
<dbReference type="OrthoDB" id="431557at2759"/>
<dbReference type="Proteomes" id="UP000186698">
    <property type="component" value="Chromosome 6L"/>
</dbReference>
<dbReference type="Proteomes" id="UP000186698">
    <property type="component" value="Chromosome 6S"/>
</dbReference>
<dbReference type="Bgee" id="108720001">
    <property type="expression patterns" value="Expressed in muscle tissue and 19 other cell types or tissues"/>
</dbReference>
<dbReference type="GO" id="GO:0005737">
    <property type="term" value="C:cytoplasm"/>
    <property type="evidence" value="ECO:0007669"/>
    <property type="project" value="UniProtKB-SubCell"/>
</dbReference>
<dbReference type="GO" id="GO:0005634">
    <property type="term" value="C:nucleus"/>
    <property type="evidence" value="ECO:0007669"/>
    <property type="project" value="UniProtKB-SubCell"/>
</dbReference>
<dbReference type="GO" id="GO:0005839">
    <property type="term" value="C:proteasome core complex"/>
    <property type="evidence" value="ECO:0000250"/>
    <property type="project" value="UniProtKB"/>
</dbReference>
<dbReference type="GO" id="GO:0019773">
    <property type="term" value="C:proteasome core complex, alpha-subunit complex"/>
    <property type="evidence" value="ECO:0000250"/>
    <property type="project" value="UniProtKB"/>
</dbReference>
<dbReference type="GO" id="GO:0043161">
    <property type="term" value="P:proteasome-mediated ubiquitin-dependent protein catabolic process"/>
    <property type="evidence" value="ECO:0000318"/>
    <property type="project" value="GO_Central"/>
</dbReference>
<dbReference type="CDD" id="cd03750">
    <property type="entry name" value="proteasome_alpha_type_2"/>
    <property type="match status" value="1"/>
</dbReference>
<dbReference type="FunFam" id="3.60.20.10:FF:000012">
    <property type="entry name" value="Proteasome subunit alpha type"/>
    <property type="match status" value="1"/>
</dbReference>
<dbReference type="Gene3D" id="3.60.20.10">
    <property type="entry name" value="Glutamine Phosphoribosylpyrophosphate, subunit 1, domain 1"/>
    <property type="match status" value="1"/>
</dbReference>
<dbReference type="InterPro" id="IPR029055">
    <property type="entry name" value="Ntn_hydrolases_N"/>
</dbReference>
<dbReference type="InterPro" id="IPR050115">
    <property type="entry name" value="Proteasome_alpha"/>
</dbReference>
<dbReference type="InterPro" id="IPR023332">
    <property type="entry name" value="Proteasome_alpha-type"/>
</dbReference>
<dbReference type="InterPro" id="IPR000426">
    <property type="entry name" value="Proteasome_asu_N"/>
</dbReference>
<dbReference type="InterPro" id="IPR001353">
    <property type="entry name" value="Proteasome_sua/b"/>
</dbReference>
<dbReference type="NCBIfam" id="NF003075">
    <property type="entry name" value="PRK03996.1"/>
    <property type="match status" value="1"/>
</dbReference>
<dbReference type="PANTHER" id="PTHR11599">
    <property type="entry name" value="PROTEASOME SUBUNIT ALPHA/BETA"/>
    <property type="match status" value="1"/>
</dbReference>
<dbReference type="Pfam" id="PF00227">
    <property type="entry name" value="Proteasome"/>
    <property type="match status" value="1"/>
</dbReference>
<dbReference type="Pfam" id="PF10584">
    <property type="entry name" value="Proteasome_A_N"/>
    <property type="match status" value="1"/>
</dbReference>
<dbReference type="SMART" id="SM00948">
    <property type="entry name" value="Proteasome_A_N"/>
    <property type="match status" value="1"/>
</dbReference>
<dbReference type="SUPFAM" id="SSF56235">
    <property type="entry name" value="N-terminal nucleophile aminohydrolases (Ntn hydrolases)"/>
    <property type="match status" value="1"/>
</dbReference>
<dbReference type="PROSITE" id="PS00388">
    <property type="entry name" value="PROTEASOME_ALPHA_1"/>
    <property type="match status" value="1"/>
</dbReference>
<dbReference type="PROSITE" id="PS51475">
    <property type="entry name" value="PROTEASOME_ALPHA_2"/>
    <property type="match status" value="1"/>
</dbReference>
<protein>
    <recommendedName>
        <fullName>Proteasome subunit alpha type-2</fullName>
    </recommendedName>
    <alternativeName>
        <fullName>Macropain subunit C3</fullName>
    </alternativeName>
    <alternativeName>
        <fullName>Multicatalytic endopeptidase complex subunit C3</fullName>
        <shortName>xC3</shortName>
    </alternativeName>
    <alternativeName>
        <fullName>Proteasome component C3</fullName>
    </alternativeName>
</protein>
<reference key="1">
    <citation type="journal article" date="1991" name="Biochem. Biophys. Res. Commun.">
        <title>Deduced primary structure of a Xenopus proteasome subunit XC3 and expression of its mRNA during early development.</title>
        <authorList>
            <person name="Fujii G."/>
            <person name="Tashiro K."/>
            <person name="Emori Y."/>
            <person name="Saigo K."/>
            <person name="Tanaka K."/>
            <person name="Shiokawa K."/>
        </authorList>
    </citation>
    <scope>NUCLEOTIDE SEQUENCE [MRNA]</scope>
</reference>
<reference key="2">
    <citation type="submission" date="2004-06" db="EMBL/GenBank/DDBJ databases">
        <authorList>
            <consortium name="NIH - Xenopus Gene Collection (XGC) project"/>
        </authorList>
    </citation>
    <scope>NUCLEOTIDE SEQUENCE [LARGE SCALE MRNA]</scope>
    <source>
        <tissue>Embryo</tissue>
    </source>
</reference>
<keyword id="KW-0007">Acetylation</keyword>
<keyword id="KW-0963">Cytoplasm</keyword>
<keyword id="KW-0539">Nucleus</keyword>
<keyword id="KW-0597">Phosphoprotein</keyword>
<keyword id="KW-0647">Proteasome</keyword>
<keyword id="KW-1185">Reference proteome</keyword>
<gene>
    <name type="primary">psma2</name>
</gene>
<organism>
    <name type="scientific">Xenopus laevis</name>
    <name type="common">African clawed frog</name>
    <dbReference type="NCBI Taxonomy" id="8355"/>
    <lineage>
        <taxon>Eukaryota</taxon>
        <taxon>Metazoa</taxon>
        <taxon>Chordata</taxon>
        <taxon>Craniata</taxon>
        <taxon>Vertebrata</taxon>
        <taxon>Euteleostomi</taxon>
        <taxon>Amphibia</taxon>
        <taxon>Batrachia</taxon>
        <taxon>Anura</taxon>
        <taxon>Pipoidea</taxon>
        <taxon>Pipidae</taxon>
        <taxon>Xenopodinae</taxon>
        <taxon>Xenopus</taxon>
        <taxon>Xenopus</taxon>
    </lineage>
</organism>
<proteinExistence type="evidence at transcript level"/>
<comment type="function">
    <text evidence="2">Component of the 20S core proteasome complex involved in the proteolytic degradation of most intracellular proteins. This complex plays numerous essential roles within the cell by associating with different regulatory particles. Associated with two 19S regulatory particles, forms the 26S proteasome and thus participates in the ATP-dependent degradation of ubiquitinated proteins. The 26S proteasome plays a key role in the maintenance of protein homeostasis by removing misfolded or damaged proteins that could impair cellular functions, and by removing proteins whose functions are no longer required. Associated with the PA200 or PA28, the 20S proteasome mediates ubiquitin-independent protein degradation. This type of proteolysis is required in several pathways including spermatogenesis (20S-PA200 complex) or generation of a subset of MHC class I-presented antigenic peptides (20S-PA28 complex).</text>
</comment>
<comment type="subunit">
    <text evidence="2">The 26S proteasome consists of a 20S proteasome core and two 19S regulatory subunits. The 20S proteasome core is a barrel-shaped complex made of 28 subunits that are arranged in four stacked rings. The two outer rings are each formed by seven alpha subunits, and the two inner rings are formed by seven beta subunits. The proteolytic activity is exerted by three beta-subunits PSMB5, PSMB6 and PSMB7.</text>
</comment>
<comment type="subcellular location">
    <subcellularLocation>
        <location evidence="2">Cytoplasm</location>
    </subcellularLocation>
    <subcellularLocation>
        <location evidence="2">Nucleus</location>
    </subcellularLocation>
</comment>
<comment type="similarity">
    <text evidence="3">Belongs to the peptidase T1A family.</text>
</comment>